<protein>
    <recommendedName>
        <fullName evidence="1">Small ribosomal subunit protein uS13</fullName>
    </recommendedName>
    <alternativeName>
        <fullName evidence="3">30S ribosomal protein S13</fullName>
    </alternativeName>
</protein>
<gene>
    <name evidence="1" type="primary">rpsM</name>
    <name type="ordered locus">AB57_3508</name>
</gene>
<dbReference type="EMBL" id="CP001182">
    <property type="protein sequence ID" value="ACJ42875.1"/>
    <property type="molecule type" value="Genomic_DNA"/>
</dbReference>
<dbReference type="RefSeq" id="WP_000090815.1">
    <property type="nucleotide sequence ID" value="NC_011586.2"/>
</dbReference>
<dbReference type="PDB" id="6V39">
    <property type="method" value="EM"/>
    <property type="resolution" value="3.04 A"/>
    <property type="chains" value="m=1-118"/>
</dbReference>
<dbReference type="PDB" id="6V3A">
    <property type="method" value="EM"/>
    <property type="resolution" value="2.82 A"/>
    <property type="chains" value="m=1-118"/>
</dbReference>
<dbReference type="PDB" id="6V3B">
    <property type="method" value="EM"/>
    <property type="resolution" value="2.91 A"/>
    <property type="chains" value="m=1-118"/>
</dbReference>
<dbReference type="PDB" id="6V3E">
    <property type="method" value="EM"/>
    <property type="resolution" value="4.40 A"/>
    <property type="chains" value="m=1-118"/>
</dbReference>
<dbReference type="PDB" id="7M4U">
    <property type="method" value="EM"/>
    <property type="resolution" value="2.71 A"/>
    <property type="chains" value="m=1-118"/>
</dbReference>
<dbReference type="PDB" id="7M4W">
    <property type="method" value="EM"/>
    <property type="resolution" value="2.55 A"/>
    <property type="chains" value="m=1-118"/>
</dbReference>
<dbReference type="PDB" id="7M4X">
    <property type="method" value="EM"/>
    <property type="resolution" value="2.66 A"/>
    <property type="chains" value="m=1-118"/>
</dbReference>
<dbReference type="PDB" id="7M4Y">
    <property type="method" value="EM"/>
    <property type="resolution" value="2.50 A"/>
    <property type="chains" value="m=1-118"/>
</dbReference>
<dbReference type="PDB" id="7M4Z">
    <property type="method" value="EM"/>
    <property type="resolution" value="2.92 A"/>
    <property type="chains" value="m=1-118"/>
</dbReference>
<dbReference type="PDB" id="7RYF">
    <property type="method" value="EM"/>
    <property type="resolution" value="2.65 A"/>
    <property type="chains" value="m=1-118"/>
</dbReference>
<dbReference type="PDB" id="7RYG">
    <property type="method" value="EM"/>
    <property type="resolution" value="2.38 A"/>
    <property type="chains" value="m=1-118"/>
</dbReference>
<dbReference type="PDB" id="7RYH">
    <property type="method" value="EM"/>
    <property type="resolution" value="2.43 A"/>
    <property type="chains" value="m=1-118"/>
</dbReference>
<dbReference type="PDB" id="7UVV">
    <property type="method" value="EM"/>
    <property type="resolution" value="2.50 A"/>
    <property type="chains" value="m=1-118"/>
</dbReference>
<dbReference type="PDB" id="7UVW">
    <property type="method" value="EM"/>
    <property type="resolution" value="2.37 A"/>
    <property type="chains" value="m=1-118"/>
</dbReference>
<dbReference type="PDB" id="7UVX">
    <property type="method" value="EM"/>
    <property type="resolution" value="2.35 A"/>
    <property type="chains" value="m=1-118"/>
</dbReference>
<dbReference type="PDB" id="7UVY">
    <property type="method" value="EM"/>
    <property type="resolution" value="2.39 A"/>
    <property type="chains" value="m=1-118"/>
</dbReference>
<dbReference type="PDB" id="7UVZ">
    <property type="method" value="EM"/>
    <property type="resolution" value="2.21 A"/>
    <property type="chains" value="m=1-118"/>
</dbReference>
<dbReference type="PDB" id="7UW1">
    <property type="method" value="EM"/>
    <property type="resolution" value="2.21 A"/>
    <property type="chains" value="m=1-118"/>
</dbReference>
<dbReference type="PDBsum" id="6V39"/>
<dbReference type="PDBsum" id="6V3A"/>
<dbReference type="PDBsum" id="6V3B"/>
<dbReference type="PDBsum" id="6V3E"/>
<dbReference type="PDBsum" id="7M4U"/>
<dbReference type="PDBsum" id="7M4W"/>
<dbReference type="PDBsum" id="7M4X"/>
<dbReference type="PDBsum" id="7M4Y"/>
<dbReference type="PDBsum" id="7M4Z"/>
<dbReference type="PDBsum" id="7RYF"/>
<dbReference type="PDBsum" id="7RYG"/>
<dbReference type="PDBsum" id="7RYH"/>
<dbReference type="PDBsum" id="7UVV"/>
<dbReference type="PDBsum" id="7UVW"/>
<dbReference type="PDBsum" id="7UVX"/>
<dbReference type="PDBsum" id="7UVY"/>
<dbReference type="PDBsum" id="7UVZ"/>
<dbReference type="PDBsum" id="7UW1"/>
<dbReference type="EMDB" id="EMD-21030"/>
<dbReference type="EMDB" id="EMD-21031"/>
<dbReference type="EMDB" id="EMD-21032"/>
<dbReference type="EMDB" id="EMD-21034"/>
<dbReference type="EMDB" id="EMD-23666"/>
<dbReference type="EMDB" id="EMD-23668"/>
<dbReference type="EMDB" id="EMD-23669"/>
<dbReference type="EMDB" id="EMD-23670"/>
<dbReference type="EMDB" id="EMD-23671"/>
<dbReference type="EMDB" id="EMD-24738"/>
<dbReference type="EMDB" id="EMD-24739"/>
<dbReference type="EMDB" id="EMD-24740"/>
<dbReference type="EMDB" id="EMD-26817"/>
<dbReference type="EMDB" id="EMD-26818"/>
<dbReference type="EMDB" id="EMD-26819"/>
<dbReference type="EMDB" id="EMD-26820"/>
<dbReference type="EMDB" id="EMD-26821"/>
<dbReference type="EMDB" id="EMD-26822"/>
<dbReference type="SMR" id="B7IA17"/>
<dbReference type="IntAct" id="B7IA17">
    <property type="interactions" value="1"/>
</dbReference>
<dbReference type="GeneID" id="92895295"/>
<dbReference type="KEGG" id="abn:AB57_3508"/>
<dbReference type="HOGENOM" id="CLU_103849_1_2_6"/>
<dbReference type="Proteomes" id="UP000007094">
    <property type="component" value="Chromosome"/>
</dbReference>
<dbReference type="GO" id="GO:0005829">
    <property type="term" value="C:cytosol"/>
    <property type="evidence" value="ECO:0007669"/>
    <property type="project" value="TreeGrafter"/>
</dbReference>
<dbReference type="GO" id="GO:0015935">
    <property type="term" value="C:small ribosomal subunit"/>
    <property type="evidence" value="ECO:0007669"/>
    <property type="project" value="TreeGrafter"/>
</dbReference>
<dbReference type="GO" id="GO:0019843">
    <property type="term" value="F:rRNA binding"/>
    <property type="evidence" value="ECO:0007669"/>
    <property type="project" value="UniProtKB-UniRule"/>
</dbReference>
<dbReference type="GO" id="GO:0003735">
    <property type="term" value="F:structural constituent of ribosome"/>
    <property type="evidence" value="ECO:0007669"/>
    <property type="project" value="InterPro"/>
</dbReference>
<dbReference type="GO" id="GO:0000049">
    <property type="term" value="F:tRNA binding"/>
    <property type="evidence" value="ECO:0007669"/>
    <property type="project" value="UniProtKB-UniRule"/>
</dbReference>
<dbReference type="GO" id="GO:0006412">
    <property type="term" value="P:translation"/>
    <property type="evidence" value="ECO:0007669"/>
    <property type="project" value="UniProtKB-UniRule"/>
</dbReference>
<dbReference type="FunFam" id="1.10.8.50:FF:000001">
    <property type="entry name" value="30S ribosomal protein S13"/>
    <property type="match status" value="1"/>
</dbReference>
<dbReference type="FunFam" id="4.10.910.10:FF:000001">
    <property type="entry name" value="30S ribosomal protein S13"/>
    <property type="match status" value="1"/>
</dbReference>
<dbReference type="Gene3D" id="1.10.8.50">
    <property type="match status" value="1"/>
</dbReference>
<dbReference type="Gene3D" id="4.10.910.10">
    <property type="entry name" value="30s ribosomal protein s13, domain 2"/>
    <property type="match status" value="1"/>
</dbReference>
<dbReference type="HAMAP" id="MF_01315">
    <property type="entry name" value="Ribosomal_uS13"/>
    <property type="match status" value="1"/>
</dbReference>
<dbReference type="InterPro" id="IPR027437">
    <property type="entry name" value="Rbsml_uS13_C"/>
</dbReference>
<dbReference type="InterPro" id="IPR001892">
    <property type="entry name" value="Ribosomal_uS13"/>
</dbReference>
<dbReference type="InterPro" id="IPR010979">
    <property type="entry name" value="Ribosomal_uS13-like_H2TH"/>
</dbReference>
<dbReference type="InterPro" id="IPR019980">
    <property type="entry name" value="Ribosomal_uS13_bac-type"/>
</dbReference>
<dbReference type="InterPro" id="IPR018269">
    <property type="entry name" value="Ribosomal_uS13_CS"/>
</dbReference>
<dbReference type="NCBIfam" id="TIGR03631">
    <property type="entry name" value="uS13_bact"/>
    <property type="match status" value="1"/>
</dbReference>
<dbReference type="PANTHER" id="PTHR10871">
    <property type="entry name" value="30S RIBOSOMAL PROTEIN S13/40S RIBOSOMAL PROTEIN S18"/>
    <property type="match status" value="1"/>
</dbReference>
<dbReference type="PANTHER" id="PTHR10871:SF1">
    <property type="entry name" value="SMALL RIBOSOMAL SUBUNIT PROTEIN US13M"/>
    <property type="match status" value="1"/>
</dbReference>
<dbReference type="Pfam" id="PF00416">
    <property type="entry name" value="Ribosomal_S13"/>
    <property type="match status" value="2"/>
</dbReference>
<dbReference type="PIRSF" id="PIRSF002134">
    <property type="entry name" value="Ribosomal_S13"/>
    <property type="match status" value="1"/>
</dbReference>
<dbReference type="SUPFAM" id="SSF46946">
    <property type="entry name" value="S13-like H2TH domain"/>
    <property type="match status" value="1"/>
</dbReference>
<dbReference type="PROSITE" id="PS00646">
    <property type="entry name" value="RIBOSOMAL_S13_1"/>
    <property type="match status" value="1"/>
</dbReference>
<dbReference type="PROSITE" id="PS50159">
    <property type="entry name" value="RIBOSOMAL_S13_2"/>
    <property type="match status" value="1"/>
</dbReference>
<evidence type="ECO:0000255" key="1">
    <source>
        <dbReference type="HAMAP-Rule" id="MF_01315"/>
    </source>
</evidence>
<evidence type="ECO:0000256" key="2">
    <source>
        <dbReference type="SAM" id="MobiDB-lite"/>
    </source>
</evidence>
<evidence type="ECO:0000305" key="3"/>
<evidence type="ECO:0007829" key="4">
    <source>
        <dbReference type="PDB" id="7M4U"/>
    </source>
</evidence>
<keyword id="KW-0002">3D-structure</keyword>
<keyword id="KW-0687">Ribonucleoprotein</keyword>
<keyword id="KW-0689">Ribosomal protein</keyword>
<keyword id="KW-0694">RNA-binding</keyword>
<keyword id="KW-0699">rRNA-binding</keyword>
<keyword id="KW-0820">tRNA-binding</keyword>
<proteinExistence type="evidence at protein level"/>
<comment type="function">
    <text evidence="1">Located at the top of the head of the 30S subunit, it contacts several helices of the 16S rRNA. In the 70S ribosome it contacts the 23S rRNA (bridge B1a) and protein L5 of the 50S subunit (bridge B1b), connecting the 2 subunits; these bridges are implicated in subunit movement. Contacts the tRNAs in the A and P-sites.</text>
</comment>
<comment type="subunit">
    <text evidence="1">Part of the 30S ribosomal subunit. Forms a loose heterodimer with protein S19. Forms two bridges to the 50S subunit in the 70S ribosome.</text>
</comment>
<comment type="similarity">
    <text evidence="1">Belongs to the universal ribosomal protein uS13 family.</text>
</comment>
<sequence length="118" mass="13267">MARIAGVNIPDNKHAVISLTYIFGIGRHTAKNILAAVGITETTKIRELDDAQLDAIRAEVAKVPTEGDLRREISMNIKRLMDLGCYRGLRHRRSLPVRGQRTKTNARTRKGPRKPIKK</sequence>
<accession>B7IA17</accession>
<reference key="1">
    <citation type="journal article" date="2008" name="J. Bacteriol.">
        <title>Comparative genome sequence analysis of multidrug-resistant Acinetobacter baumannii.</title>
        <authorList>
            <person name="Adams M.D."/>
            <person name="Goglin K."/>
            <person name="Molyneaux N."/>
            <person name="Hujer K.M."/>
            <person name="Lavender H."/>
            <person name="Jamison J.J."/>
            <person name="MacDonald I.J."/>
            <person name="Martin K.M."/>
            <person name="Russo T."/>
            <person name="Campagnari A.A."/>
            <person name="Hujer A.M."/>
            <person name="Bonomo R.A."/>
            <person name="Gill S.R."/>
        </authorList>
    </citation>
    <scope>NUCLEOTIDE SEQUENCE [LARGE SCALE GENOMIC DNA]</scope>
    <source>
        <strain>AB0057</strain>
    </source>
</reference>
<feature type="chain" id="PRO_1000141204" description="Small ribosomal subunit protein uS13">
    <location>
        <begin position="1"/>
        <end position="118"/>
    </location>
</feature>
<feature type="region of interest" description="Disordered" evidence="2">
    <location>
        <begin position="92"/>
        <end position="118"/>
    </location>
</feature>
<feature type="strand" evidence="4">
    <location>
        <begin position="3"/>
        <end position="6"/>
    </location>
</feature>
<feature type="strand" evidence="4">
    <location>
        <begin position="11"/>
        <end position="14"/>
    </location>
</feature>
<feature type="helix" evidence="4">
    <location>
        <begin position="15"/>
        <end position="18"/>
    </location>
</feature>
<feature type="helix" evidence="4">
    <location>
        <begin position="19"/>
        <end position="21"/>
    </location>
</feature>
<feature type="helix" evidence="4">
    <location>
        <begin position="27"/>
        <end position="37"/>
    </location>
</feature>
<feature type="helix" evidence="4">
    <location>
        <begin position="45"/>
        <end position="47"/>
    </location>
</feature>
<feature type="helix" evidence="4">
    <location>
        <begin position="50"/>
        <end position="61"/>
    </location>
</feature>
<feature type="helix" evidence="4">
    <location>
        <begin position="67"/>
        <end position="83"/>
    </location>
</feature>
<feature type="helix" evidence="4">
    <location>
        <begin position="86"/>
        <end position="93"/>
    </location>
</feature>
<feature type="strand" evidence="4">
    <location>
        <begin position="97"/>
        <end position="99"/>
    </location>
</feature>
<feature type="strand" evidence="4">
    <location>
        <begin position="102"/>
        <end position="104"/>
    </location>
</feature>
<feature type="helix" evidence="4">
    <location>
        <begin position="107"/>
        <end position="110"/>
    </location>
</feature>
<organism>
    <name type="scientific">Acinetobacter baumannii (strain AB0057)</name>
    <dbReference type="NCBI Taxonomy" id="480119"/>
    <lineage>
        <taxon>Bacteria</taxon>
        <taxon>Pseudomonadati</taxon>
        <taxon>Pseudomonadota</taxon>
        <taxon>Gammaproteobacteria</taxon>
        <taxon>Moraxellales</taxon>
        <taxon>Moraxellaceae</taxon>
        <taxon>Acinetobacter</taxon>
        <taxon>Acinetobacter calcoaceticus/baumannii complex</taxon>
    </lineage>
</organism>
<name>RS13_ACIB5</name>